<name>CSRA_HELPS</name>
<reference key="1">
    <citation type="submission" date="2008-05" db="EMBL/GenBank/DDBJ databases">
        <title>Genome sequence of Helicobacter pylori from the remote Amazon: traces of Asian ancestry of the first Americans.</title>
        <authorList>
            <person name="Kersulyte D."/>
            <person name="Kalia A."/>
            <person name="Gilman R.H."/>
            <person name="Berg D.E."/>
        </authorList>
    </citation>
    <scope>NUCLEOTIDE SEQUENCE [LARGE SCALE GENOMIC DNA]</scope>
    <source>
        <strain>Shi470</strain>
    </source>
</reference>
<dbReference type="EMBL" id="CP001072">
    <property type="protein sequence ID" value="ACD48869.1"/>
    <property type="molecule type" value="Genomic_DNA"/>
</dbReference>
<dbReference type="RefSeq" id="WP_000906444.1">
    <property type="nucleotide sequence ID" value="NC_010698.2"/>
</dbReference>
<dbReference type="BMRB" id="B2UVI7"/>
<dbReference type="SMR" id="B2UVI7"/>
<dbReference type="KEGG" id="hps:HPSH_07380"/>
<dbReference type="HOGENOM" id="CLU_164837_0_0_7"/>
<dbReference type="GO" id="GO:0005829">
    <property type="term" value="C:cytosol"/>
    <property type="evidence" value="ECO:0007669"/>
    <property type="project" value="TreeGrafter"/>
</dbReference>
<dbReference type="GO" id="GO:0048027">
    <property type="term" value="F:mRNA 5'-UTR binding"/>
    <property type="evidence" value="ECO:0007669"/>
    <property type="project" value="UniProtKB-UniRule"/>
</dbReference>
<dbReference type="GO" id="GO:0044781">
    <property type="term" value="P:bacterial-type flagellum organization"/>
    <property type="evidence" value="ECO:0007669"/>
    <property type="project" value="UniProtKB-KW"/>
</dbReference>
<dbReference type="GO" id="GO:0006402">
    <property type="term" value="P:mRNA catabolic process"/>
    <property type="evidence" value="ECO:0007669"/>
    <property type="project" value="InterPro"/>
</dbReference>
<dbReference type="GO" id="GO:0045947">
    <property type="term" value="P:negative regulation of translational initiation"/>
    <property type="evidence" value="ECO:0007669"/>
    <property type="project" value="UniProtKB-UniRule"/>
</dbReference>
<dbReference type="GO" id="GO:1902208">
    <property type="term" value="P:regulation of bacterial-type flagellum assembly"/>
    <property type="evidence" value="ECO:0007669"/>
    <property type="project" value="UniProtKB-UniRule"/>
</dbReference>
<dbReference type="GO" id="GO:0006109">
    <property type="term" value="P:regulation of carbohydrate metabolic process"/>
    <property type="evidence" value="ECO:0007669"/>
    <property type="project" value="InterPro"/>
</dbReference>
<dbReference type="FunFam" id="2.60.40.4380:FF:000002">
    <property type="entry name" value="Translational regulator CsrA"/>
    <property type="match status" value="1"/>
</dbReference>
<dbReference type="Gene3D" id="2.60.40.4380">
    <property type="entry name" value="Translational regulator CsrA"/>
    <property type="match status" value="1"/>
</dbReference>
<dbReference type="HAMAP" id="MF_00167">
    <property type="entry name" value="CsrA"/>
    <property type="match status" value="1"/>
</dbReference>
<dbReference type="InterPro" id="IPR003751">
    <property type="entry name" value="CsrA"/>
</dbReference>
<dbReference type="InterPro" id="IPR036107">
    <property type="entry name" value="CsrA_sf"/>
</dbReference>
<dbReference type="NCBIfam" id="TIGR00202">
    <property type="entry name" value="csrA"/>
    <property type="match status" value="1"/>
</dbReference>
<dbReference type="NCBIfam" id="NF001844">
    <property type="entry name" value="PRK00568.1"/>
    <property type="match status" value="1"/>
</dbReference>
<dbReference type="PANTHER" id="PTHR34984">
    <property type="entry name" value="CARBON STORAGE REGULATOR"/>
    <property type="match status" value="1"/>
</dbReference>
<dbReference type="PANTHER" id="PTHR34984:SF1">
    <property type="entry name" value="CARBON STORAGE REGULATOR"/>
    <property type="match status" value="1"/>
</dbReference>
<dbReference type="Pfam" id="PF02599">
    <property type="entry name" value="CsrA"/>
    <property type="match status" value="1"/>
</dbReference>
<dbReference type="SUPFAM" id="SSF117130">
    <property type="entry name" value="CsrA-like"/>
    <property type="match status" value="1"/>
</dbReference>
<organism>
    <name type="scientific">Helicobacter pylori (strain Shi470)</name>
    <dbReference type="NCBI Taxonomy" id="512562"/>
    <lineage>
        <taxon>Bacteria</taxon>
        <taxon>Pseudomonadati</taxon>
        <taxon>Campylobacterota</taxon>
        <taxon>Epsilonproteobacteria</taxon>
        <taxon>Campylobacterales</taxon>
        <taxon>Helicobacteraceae</taxon>
        <taxon>Helicobacter</taxon>
    </lineage>
</organism>
<proteinExistence type="inferred from homology"/>
<accession>B2UVI7</accession>
<protein>
    <recommendedName>
        <fullName evidence="1">Translational regulator CsrA</fullName>
    </recommendedName>
</protein>
<comment type="function">
    <text evidence="1">A translational regulator that binds mRNA to regulate translation initiation and/or mRNA stability. Usually binds in the 5'-UTR at or near the Shine-Dalgarno sequence preventing ribosome-binding, thus repressing translation. Its main target seems to be the major flagellin gene, while its function is anatagonized by FliW.</text>
</comment>
<comment type="subunit">
    <text evidence="1">Homodimer; the beta-strands of each monomer intercalate to form a hydrophobic core, while the alpha-helices form wings that extend away from the core.</text>
</comment>
<comment type="subcellular location">
    <subcellularLocation>
        <location evidence="1">Cytoplasm</location>
    </subcellularLocation>
</comment>
<comment type="similarity">
    <text evidence="1">Belongs to the CsrA/RsmA family.</text>
</comment>
<evidence type="ECO:0000255" key="1">
    <source>
        <dbReference type="HAMAP-Rule" id="MF_00167"/>
    </source>
</evidence>
<keyword id="KW-1005">Bacterial flagellum biogenesis</keyword>
<keyword id="KW-0963">Cytoplasm</keyword>
<keyword id="KW-0678">Repressor</keyword>
<keyword id="KW-0694">RNA-binding</keyword>
<keyword id="KW-0810">Translation regulation</keyword>
<feature type="chain" id="PRO_1000097495" description="Translational regulator CsrA">
    <location>
        <begin position="1"/>
        <end position="76"/>
    </location>
</feature>
<sequence>MLILSRKVNEGIVIDDNIHIKVISIDRGSVRLGFEAPESTLILRAELKEAIVSENQKASASVDESLLENIKKVIKP</sequence>
<gene>
    <name evidence="1" type="primary">csrA</name>
    <name type="ordered locus">HPSH_07380</name>
</gene>